<protein>
    <recommendedName>
        <fullName evidence="1">Periplasmic nitrate reductase</fullName>
        <ecNumber evidence="1">1.9.6.1</ecNumber>
    </recommendedName>
</protein>
<dbReference type="EC" id="1.9.6.1" evidence="1"/>
<dbReference type="EMBL" id="CP000946">
    <property type="protein sequence ID" value="ACA77107.1"/>
    <property type="molecule type" value="Genomic_DNA"/>
</dbReference>
<dbReference type="RefSeq" id="WP_000778067.1">
    <property type="nucleotide sequence ID" value="NZ_MTFT01000031.1"/>
</dbReference>
<dbReference type="SMR" id="B1IY66"/>
<dbReference type="GeneID" id="93774972"/>
<dbReference type="KEGG" id="ecl:EcolC_1444"/>
<dbReference type="HOGENOM" id="CLU_000422_13_4_6"/>
<dbReference type="GO" id="GO:0016020">
    <property type="term" value="C:membrane"/>
    <property type="evidence" value="ECO:0007669"/>
    <property type="project" value="TreeGrafter"/>
</dbReference>
<dbReference type="GO" id="GO:0009325">
    <property type="term" value="C:nitrate reductase complex"/>
    <property type="evidence" value="ECO:0007669"/>
    <property type="project" value="TreeGrafter"/>
</dbReference>
<dbReference type="GO" id="GO:0042597">
    <property type="term" value="C:periplasmic space"/>
    <property type="evidence" value="ECO:0007669"/>
    <property type="project" value="UniProtKB-SubCell"/>
</dbReference>
<dbReference type="GO" id="GO:0051539">
    <property type="term" value="F:4 iron, 4 sulfur cluster binding"/>
    <property type="evidence" value="ECO:0007669"/>
    <property type="project" value="UniProtKB-KW"/>
</dbReference>
<dbReference type="GO" id="GO:0009055">
    <property type="term" value="F:electron transfer activity"/>
    <property type="evidence" value="ECO:0007669"/>
    <property type="project" value="UniProtKB-UniRule"/>
</dbReference>
<dbReference type="GO" id="GO:0005506">
    <property type="term" value="F:iron ion binding"/>
    <property type="evidence" value="ECO:0007669"/>
    <property type="project" value="UniProtKB-UniRule"/>
</dbReference>
<dbReference type="GO" id="GO:0030151">
    <property type="term" value="F:molybdenum ion binding"/>
    <property type="evidence" value="ECO:0007669"/>
    <property type="project" value="InterPro"/>
</dbReference>
<dbReference type="GO" id="GO:0043546">
    <property type="term" value="F:molybdopterin cofactor binding"/>
    <property type="evidence" value="ECO:0007669"/>
    <property type="project" value="InterPro"/>
</dbReference>
<dbReference type="GO" id="GO:0050140">
    <property type="term" value="F:nitrate reductase (cytochrome) activity"/>
    <property type="evidence" value="ECO:0007669"/>
    <property type="project" value="UniProtKB-EC"/>
</dbReference>
<dbReference type="GO" id="GO:0045333">
    <property type="term" value="P:cellular respiration"/>
    <property type="evidence" value="ECO:0007669"/>
    <property type="project" value="UniProtKB-ARBA"/>
</dbReference>
<dbReference type="GO" id="GO:0006777">
    <property type="term" value="P:Mo-molybdopterin cofactor biosynthetic process"/>
    <property type="evidence" value="ECO:0007669"/>
    <property type="project" value="UniProtKB-UniRule"/>
</dbReference>
<dbReference type="GO" id="GO:0042128">
    <property type="term" value="P:nitrate assimilation"/>
    <property type="evidence" value="ECO:0007669"/>
    <property type="project" value="UniProtKB-UniRule"/>
</dbReference>
<dbReference type="CDD" id="cd02791">
    <property type="entry name" value="MopB_CT_Nitrate-R-NapA-like"/>
    <property type="match status" value="1"/>
</dbReference>
<dbReference type="CDD" id="cd02754">
    <property type="entry name" value="MopB_Nitrate-R-NapA-like"/>
    <property type="match status" value="1"/>
</dbReference>
<dbReference type="FunFam" id="2.40.40.20:FF:000005">
    <property type="entry name" value="Periplasmic nitrate reductase"/>
    <property type="match status" value="1"/>
</dbReference>
<dbReference type="FunFam" id="3.40.228.10:FF:000001">
    <property type="entry name" value="Periplasmic nitrate reductase"/>
    <property type="match status" value="1"/>
</dbReference>
<dbReference type="Gene3D" id="2.40.40.20">
    <property type="match status" value="1"/>
</dbReference>
<dbReference type="Gene3D" id="3.30.200.210">
    <property type="match status" value="1"/>
</dbReference>
<dbReference type="Gene3D" id="3.40.50.740">
    <property type="match status" value="1"/>
</dbReference>
<dbReference type="Gene3D" id="3.40.228.10">
    <property type="entry name" value="Dimethylsulfoxide Reductase, domain 2"/>
    <property type="match status" value="1"/>
</dbReference>
<dbReference type="HAMAP" id="MF_01630">
    <property type="entry name" value="Nitrate_reduct_NapA"/>
    <property type="match status" value="1"/>
</dbReference>
<dbReference type="InterPro" id="IPR009010">
    <property type="entry name" value="Asp_de-COase-like_dom_sf"/>
</dbReference>
<dbReference type="InterPro" id="IPR041957">
    <property type="entry name" value="CT_Nitrate-R-NapA-like"/>
</dbReference>
<dbReference type="InterPro" id="IPR006657">
    <property type="entry name" value="MoPterin_dinucl-bd_dom"/>
</dbReference>
<dbReference type="InterPro" id="IPR006656">
    <property type="entry name" value="Mopterin_OxRdtase"/>
</dbReference>
<dbReference type="InterPro" id="IPR006963">
    <property type="entry name" value="Mopterin_OxRdtase_4Fe-4S_dom"/>
</dbReference>
<dbReference type="InterPro" id="IPR027467">
    <property type="entry name" value="MopterinOxRdtase_cofactor_BS"/>
</dbReference>
<dbReference type="InterPro" id="IPR010051">
    <property type="entry name" value="Periplasm_NO3_reductase_lsu"/>
</dbReference>
<dbReference type="InterPro" id="IPR050123">
    <property type="entry name" value="Prok_molybdopt-oxidoreductase"/>
</dbReference>
<dbReference type="InterPro" id="IPR006311">
    <property type="entry name" value="TAT_signal"/>
</dbReference>
<dbReference type="InterPro" id="IPR019546">
    <property type="entry name" value="TAT_signal_bac_arc"/>
</dbReference>
<dbReference type="NCBIfam" id="TIGR01706">
    <property type="entry name" value="NAPA"/>
    <property type="match status" value="1"/>
</dbReference>
<dbReference type="NCBIfam" id="NF010055">
    <property type="entry name" value="PRK13532.1"/>
    <property type="match status" value="1"/>
</dbReference>
<dbReference type="NCBIfam" id="TIGR01409">
    <property type="entry name" value="TAT_signal_seq"/>
    <property type="match status" value="1"/>
</dbReference>
<dbReference type="PANTHER" id="PTHR43105:SF11">
    <property type="entry name" value="PERIPLASMIC NITRATE REDUCTASE"/>
    <property type="match status" value="1"/>
</dbReference>
<dbReference type="PANTHER" id="PTHR43105">
    <property type="entry name" value="RESPIRATORY NITRATE REDUCTASE"/>
    <property type="match status" value="1"/>
</dbReference>
<dbReference type="Pfam" id="PF04879">
    <property type="entry name" value="Molybdop_Fe4S4"/>
    <property type="match status" value="1"/>
</dbReference>
<dbReference type="Pfam" id="PF00384">
    <property type="entry name" value="Molybdopterin"/>
    <property type="match status" value="1"/>
</dbReference>
<dbReference type="Pfam" id="PF01568">
    <property type="entry name" value="Molydop_binding"/>
    <property type="match status" value="1"/>
</dbReference>
<dbReference type="SMART" id="SM00926">
    <property type="entry name" value="Molybdop_Fe4S4"/>
    <property type="match status" value="1"/>
</dbReference>
<dbReference type="SUPFAM" id="SSF50692">
    <property type="entry name" value="ADC-like"/>
    <property type="match status" value="1"/>
</dbReference>
<dbReference type="SUPFAM" id="SSF53706">
    <property type="entry name" value="Formate dehydrogenase/DMSO reductase, domains 1-3"/>
    <property type="match status" value="1"/>
</dbReference>
<dbReference type="PROSITE" id="PS51669">
    <property type="entry name" value="4FE4S_MOW_BIS_MGD"/>
    <property type="match status" value="1"/>
</dbReference>
<dbReference type="PROSITE" id="PS00551">
    <property type="entry name" value="MOLYBDOPTERIN_PROK_1"/>
    <property type="match status" value="1"/>
</dbReference>
<dbReference type="PROSITE" id="PS51318">
    <property type="entry name" value="TAT"/>
    <property type="match status" value="1"/>
</dbReference>
<organism>
    <name type="scientific">Escherichia coli (strain ATCC 8739 / DSM 1576 / NBRC 3972 / NCIMB 8545 / WDCM 00012 / Crooks)</name>
    <dbReference type="NCBI Taxonomy" id="481805"/>
    <lineage>
        <taxon>Bacteria</taxon>
        <taxon>Pseudomonadati</taxon>
        <taxon>Pseudomonadota</taxon>
        <taxon>Gammaproteobacteria</taxon>
        <taxon>Enterobacterales</taxon>
        <taxon>Enterobacteriaceae</taxon>
        <taxon>Escherichia</taxon>
    </lineage>
</organism>
<comment type="function">
    <text evidence="1">Catalytic subunit of the periplasmic nitrate reductase complex NapAB. Receives electrons from NapB and catalyzes the reduction of nitrate to nitrite.</text>
</comment>
<comment type="catalytic activity">
    <reaction evidence="1">
        <text>2 Fe(II)-[cytochrome] + nitrate + 2 H(+) = 2 Fe(III)-[cytochrome] + nitrite + H2O</text>
        <dbReference type="Rhea" id="RHEA:12909"/>
        <dbReference type="Rhea" id="RHEA-COMP:11777"/>
        <dbReference type="Rhea" id="RHEA-COMP:11778"/>
        <dbReference type="ChEBI" id="CHEBI:15377"/>
        <dbReference type="ChEBI" id="CHEBI:15378"/>
        <dbReference type="ChEBI" id="CHEBI:16301"/>
        <dbReference type="ChEBI" id="CHEBI:17632"/>
        <dbReference type="ChEBI" id="CHEBI:29033"/>
        <dbReference type="ChEBI" id="CHEBI:29034"/>
        <dbReference type="EC" id="1.9.6.1"/>
    </reaction>
</comment>
<comment type="cofactor">
    <cofactor evidence="1">
        <name>[4Fe-4S] cluster</name>
        <dbReference type="ChEBI" id="CHEBI:49883"/>
    </cofactor>
    <text evidence="1">Binds 1 [4Fe-4S] cluster.</text>
</comment>
<comment type="cofactor">
    <cofactor evidence="1">
        <name>Mo-bis(molybdopterin guanine dinucleotide)</name>
        <dbReference type="ChEBI" id="CHEBI:60539"/>
    </cofactor>
    <text evidence="1">Binds 1 molybdenum-bis(molybdopterin guanine dinucleotide) (Mo-bis-MGD) cofactor per subunit.</text>
</comment>
<comment type="subunit">
    <text evidence="1">Component of the periplasmic nitrate reductase NapAB complex composed of NapA and NapB.</text>
</comment>
<comment type="subcellular location">
    <subcellularLocation>
        <location evidence="1">Periplasm</location>
    </subcellularLocation>
</comment>
<comment type="PTM">
    <text evidence="1">Predicted to be exported by the Tat system. The position of the signal peptide cleavage has not been experimentally proven.</text>
</comment>
<comment type="similarity">
    <text evidence="1">Belongs to the prokaryotic molybdopterin-containing oxidoreductase family. NasA/NapA/NarB subfamily.</text>
</comment>
<feature type="signal peptide" description="Tat-type signal" evidence="1">
    <location>
        <begin position="1"/>
        <end position="31"/>
    </location>
</feature>
<feature type="chain" id="PRO_5000314250" description="Periplasmic nitrate reductase" evidence="1">
    <location>
        <begin position="32"/>
        <end position="828"/>
    </location>
</feature>
<feature type="domain" description="4Fe-4S Mo/W bis-MGD-type" evidence="1">
    <location>
        <begin position="39"/>
        <end position="95"/>
    </location>
</feature>
<feature type="binding site" evidence="1">
    <location>
        <position position="46"/>
    </location>
    <ligand>
        <name>[4Fe-4S] cluster</name>
        <dbReference type="ChEBI" id="CHEBI:49883"/>
    </ligand>
</feature>
<feature type="binding site" evidence="1">
    <location>
        <position position="49"/>
    </location>
    <ligand>
        <name>[4Fe-4S] cluster</name>
        <dbReference type="ChEBI" id="CHEBI:49883"/>
    </ligand>
</feature>
<feature type="binding site" evidence="1">
    <location>
        <position position="53"/>
    </location>
    <ligand>
        <name>[4Fe-4S] cluster</name>
        <dbReference type="ChEBI" id="CHEBI:49883"/>
    </ligand>
</feature>
<feature type="binding site" evidence="1">
    <location>
        <position position="81"/>
    </location>
    <ligand>
        <name>[4Fe-4S] cluster</name>
        <dbReference type="ChEBI" id="CHEBI:49883"/>
    </ligand>
</feature>
<feature type="binding site" evidence="1">
    <location>
        <position position="83"/>
    </location>
    <ligand>
        <name>Mo-bis(molybdopterin guanine dinucleotide)</name>
        <dbReference type="ChEBI" id="CHEBI:60539"/>
    </ligand>
</feature>
<feature type="binding site" evidence="1">
    <location>
        <position position="150"/>
    </location>
    <ligand>
        <name>Mo-bis(molybdopterin guanine dinucleotide)</name>
        <dbReference type="ChEBI" id="CHEBI:60539"/>
    </ligand>
</feature>
<feature type="binding site" evidence="1">
    <location>
        <position position="175"/>
    </location>
    <ligand>
        <name>Mo-bis(molybdopterin guanine dinucleotide)</name>
        <dbReference type="ChEBI" id="CHEBI:60539"/>
    </ligand>
</feature>
<feature type="binding site" evidence="1">
    <location>
        <position position="179"/>
    </location>
    <ligand>
        <name>Mo-bis(molybdopterin guanine dinucleotide)</name>
        <dbReference type="ChEBI" id="CHEBI:60539"/>
    </ligand>
</feature>
<feature type="binding site" evidence="1">
    <location>
        <begin position="212"/>
        <end position="219"/>
    </location>
    <ligand>
        <name>Mo-bis(molybdopterin guanine dinucleotide)</name>
        <dbReference type="ChEBI" id="CHEBI:60539"/>
    </ligand>
</feature>
<feature type="binding site" evidence="1">
    <location>
        <begin position="243"/>
        <end position="247"/>
    </location>
    <ligand>
        <name>Mo-bis(molybdopterin guanine dinucleotide)</name>
        <dbReference type="ChEBI" id="CHEBI:60539"/>
    </ligand>
</feature>
<feature type="binding site" evidence="1">
    <location>
        <begin position="262"/>
        <end position="264"/>
    </location>
    <ligand>
        <name>Mo-bis(molybdopterin guanine dinucleotide)</name>
        <dbReference type="ChEBI" id="CHEBI:60539"/>
    </ligand>
</feature>
<feature type="binding site" evidence="1">
    <location>
        <position position="372"/>
    </location>
    <ligand>
        <name>Mo-bis(molybdopterin guanine dinucleotide)</name>
        <dbReference type="ChEBI" id="CHEBI:60539"/>
    </ligand>
</feature>
<feature type="binding site" evidence="1">
    <location>
        <position position="376"/>
    </location>
    <ligand>
        <name>Mo-bis(molybdopterin guanine dinucleotide)</name>
        <dbReference type="ChEBI" id="CHEBI:60539"/>
    </ligand>
</feature>
<feature type="binding site" evidence="1">
    <location>
        <position position="482"/>
    </location>
    <ligand>
        <name>Mo-bis(molybdopterin guanine dinucleotide)</name>
        <dbReference type="ChEBI" id="CHEBI:60539"/>
    </ligand>
</feature>
<feature type="binding site" evidence="1">
    <location>
        <begin position="508"/>
        <end position="509"/>
    </location>
    <ligand>
        <name>Mo-bis(molybdopterin guanine dinucleotide)</name>
        <dbReference type="ChEBI" id="CHEBI:60539"/>
    </ligand>
</feature>
<feature type="binding site" evidence="1">
    <location>
        <position position="531"/>
    </location>
    <ligand>
        <name>Mo-bis(molybdopterin guanine dinucleotide)</name>
        <dbReference type="ChEBI" id="CHEBI:60539"/>
    </ligand>
</feature>
<feature type="binding site" evidence="1">
    <location>
        <position position="558"/>
    </location>
    <ligand>
        <name>Mo-bis(molybdopterin guanine dinucleotide)</name>
        <dbReference type="ChEBI" id="CHEBI:60539"/>
    </ligand>
</feature>
<feature type="binding site" evidence="1">
    <location>
        <begin position="718"/>
        <end position="727"/>
    </location>
    <ligand>
        <name>Mo-bis(molybdopterin guanine dinucleotide)</name>
        <dbReference type="ChEBI" id="CHEBI:60539"/>
    </ligand>
</feature>
<feature type="binding site" evidence="1">
    <location>
        <position position="794"/>
    </location>
    <ligand>
        <name>substrate</name>
    </ligand>
</feature>
<feature type="binding site" evidence="1">
    <location>
        <position position="802"/>
    </location>
    <ligand>
        <name>Mo-bis(molybdopterin guanine dinucleotide)</name>
        <dbReference type="ChEBI" id="CHEBI:60539"/>
    </ligand>
</feature>
<feature type="binding site" evidence="1">
    <location>
        <position position="819"/>
    </location>
    <ligand>
        <name>Mo-bis(molybdopterin guanine dinucleotide)</name>
        <dbReference type="ChEBI" id="CHEBI:60539"/>
    </ligand>
</feature>
<accession>B1IY66</accession>
<gene>
    <name evidence="1" type="primary">napA</name>
    <name type="ordered locus">EcolC_1444</name>
</gene>
<name>NAPA_ECOLC</name>
<reference key="1">
    <citation type="submission" date="2008-02" db="EMBL/GenBank/DDBJ databases">
        <title>Complete sequence of Escherichia coli C str. ATCC 8739.</title>
        <authorList>
            <person name="Copeland A."/>
            <person name="Lucas S."/>
            <person name="Lapidus A."/>
            <person name="Glavina del Rio T."/>
            <person name="Dalin E."/>
            <person name="Tice H."/>
            <person name="Bruce D."/>
            <person name="Goodwin L."/>
            <person name="Pitluck S."/>
            <person name="Kiss H."/>
            <person name="Brettin T."/>
            <person name="Detter J.C."/>
            <person name="Han C."/>
            <person name="Kuske C.R."/>
            <person name="Schmutz J."/>
            <person name="Larimer F."/>
            <person name="Land M."/>
            <person name="Hauser L."/>
            <person name="Kyrpides N."/>
            <person name="Mikhailova N."/>
            <person name="Ingram L."/>
            <person name="Richardson P."/>
        </authorList>
    </citation>
    <scope>NUCLEOTIDE SEQUENCE [LARGE SCALE GENOMIC DNA]</scope>
    <source>
        <strain>ATCC 8739 / DSM 1576 / NBRC 3972 / NCIMB 8545 / WDCM 00012 / Crooks</strain>
    </source>
</reference>
<keyword id="KW-0004">4Fe-4S</keyword>
<keyword id="KW-0249">Electron transport</keyword>
<keyword id="KW-0408">Iron</keyword>
<keyword id="KW-0411">Iron-sulfur</keyword>
<keyword id="KW-0479">Metal-binding</keyword>
<keyword id="KW-0500">Molybdenum</keyword>
<keyword id="KW-0534">Nitrate assimilation</keyword>
<keyword id="KW-0560">Oxidoreductase</keyword>
<keyword id="KW-0574">Periplasm</keyword>
<keyword id="KW-0732">Signal</keyword>
<keyword id="KW-0813">Transport</keyword>
<sequence length="828" mass="93056">MKLSRRSFMKANAVAAAAAAAGLSVPGVARAVVGQQEAIKWDKAPCRFCGTGCGVLVGTQQGRVVACQGDPDAPVNRGLNCIKGYFLPKIMYGKDRLTQPLLRMKNGKYDKEGEFTPITWDQAFDVMEEKFKTALKEKGPESIGMFGSGQWTIWEGYAASKLFKAGFRSNNIDPNARHCMASAVVGFMRTFGMDEPMGCYDDIEQADAFVLWGANMAEMHPILWSRITNRRLSNQNVTVAVLSTYQHRSFELADNGIIFTPQSDLVILNYIANYIIQNNAINQDFFSKHVNLRKGATDIGYGLRPTHPLEKAAKNPGSDASEPMSFEDYKAFVAEYTLEKTAEMTGVPKDQLEQLAQLYADPNKKVISYWTMGFNQHTRGVWANNLVYNLHLLTGKISQPGCGPFSLTGQPSACGTAREVGTFAHRLPADMVVTNEKHRDICEKKWNIPSGTIPAKIGLHAVAQDRALKDGKLNVYWTMCTNNMQAGPNINEERMPGWRDPRNFIIVSDPYPTVSALAADLILPTAMWVEKEGAYGNAERRTQFWRQQVQAPGEAKSDLWQLVQFSRRFKTEEVWPEELLAKKPELRGKTLYEVLYATPEVSKFPVSELAEDQLNDESRELGFYLQKGLFEEYAWFGRGHGHDLAPFDDYHKARGLRWPVVNGKETQWRYSEGNDPYVKAGEGYKFYGKPDGKAVIFALPFEPAAEAPDEEYDLWLSTGRVLEHWHTGSMTRRVPELHRAFPEAVLFIHPLDAKARDLRRGDKVKVVSRRGEVISIVETRGRNRPPQGLVYMPFFDAAQLVNKLTLDATDPLSKETDFKKCAVKLEKV</sequence>
<evidence type="ECO:0000255" key="1">
    <source>
        <dbReference type="HAMAP-Rule" id="MF_01630"/>
    </source>
</evidence>
<proteinExistence type="inferred from homology"/>